<protein>
    <recommendedName>
        <fullName evidence="2">Haloalkane dehalogenase</fullName>
        <ecNumber evidence="2">3.8.1.5</ecNumber>
    </recommendedName>
</protein>
<evidence type="ECO:0000255" key="1"/>
<evidence type="ECO:0000255" key="2">
    <source>
        <dbReference type="HAMAP-Rule" id="MF_01231"/>
    </source>
</evidence>
<name>DHAA_MYCBP</name>
<organism>
    <name type="scientific">Mycobacterium bovis (strain BCG / Pasteur 1173P2)</name>
    <dbReference type="NCBI Taxonomy" id="410289"/>
    <lineage>
        <taxon>Bacteria</taxon>
        <taxon>Bacillati</taxon>
        <taxon>Actinomycetota</taxon>
        <taxon>Actinomycetes</taxon>
        <taxon>Mycobacteriales</taxon>
        <taxon>Mycobacteriaceae</taxon>
        <taxon>Mycobacterium</taxon>
        <taxon>Mycobacterium tuberculosis complex</taxon>
    </lineage>
</organism>
<feature type="chain" id="PRO_1000066843" description="Haloalkane dehalogenase">
    <location>
        <begin position="1"/>
        <end position="300"/>
    </location>
</feature>
<feature type="domain" description="AB hydrolase-1" evidence="1">
    <location>
        <begin position="32"/>
        <end position="155"/>
    </location>
</feature>
<feature type="active site" description="Nucleophile" evidence="2">
    <location>
        <position position="109"/>
    </location>
</feature>
<feature type="active site" description="Proton donor" evidence="2">
    <location>
        <position position="133"/>
    </location>
</feature>
<feature type="active site" description="Proton acceptor" evidence="2">
    <location>
        <position position="273"/>
    </location>
</feature>
<gene>
    <name evidence="2" type="primary">dhaA</name>
    <name type="ordered locus">BCG_2602</name>
</gene>
<proteinExistence type="inferred from homology"/>
<reference key="1">
    <citation type="journal article" date="2007" name="Proc. Natl. Acad. Sci. U.S.A.">
        <title>Genome plasticity of BCG and impact on vaccine efficacy.</title>
        <authorList>
            <person name="Brosch R."/>
            <person name="Gordon S.V."/>
            <person name="Garnier T."/>
            <person name="Eiglmeier K."/>
            <person name="Frigui W."/>
            <person name="Valenti P."/>
            <person name="Dos Santos S."/>
            <person name="Duthoy S."/>
            <person name="Lacroix C."/>
            <person name="Garcia-Pelayo C."/>
            <person name="Inwald J.K."/>
            <person name="Golby P."/>
            <person name="Garcia J.N."/>
            <person name="Hewinson R.G."/>
            <person name="Behr M.A."/>
            <person name="Quail M.A."/>
            <person name="Churcher C."/>
            <person name="Barrell B.G."/>
            <person name="Parkhill J."/>
            <person name="Cole S.T."/>
        </authorList>
    </citation>
    <scope>NUCLEOTIDE SEQUENCE [LARGE SCALE GENOMIC DNA]</scope>
    <source>
        <strain>BCG / Pasteur 1173P2</strain>
    </source>
</reference>
<sequence>MTAFGVEPYGQPKYLEIAGKRMAYIDEGKGDAIVFQHGNPTSSYLWRNIMPHLEGLGRLVACDLIGMGASDKLSPSGPDRYSYGEQRDFLFALWDALDLGDHVVLVLHDWGSALGFDWANQHRDRVQGIAFMEAIVTPMTWADWPPAVRGVFQGFRSPQGEPMALEHNIFVERVLPGAILRQLSDEEMNHYRRPFVNGGEDRRPTLSWPRNLPIDGEPAEVVALVNEYRSWLEETDMPKLFINAEPGAIITGRIRDYVRSWPNQTEITVPGVHFVQEDSPEEIGAAIAQFVRQLRSAAGV</sequence>
<dbReference type="EC" id="3.8.1.5" evidence="2"/>
<dbReference type="EMBL" id="AM408590">
    <property type="protein sequence ID" value="CAL72590.1"/>
    <property type="molecule type" value="Genomic_DNA"/>
</dbReference>
<dbReference type="RefSeq" id="WP_011799277.1">
    <property type="nucleotide sequence ID" value="NC_008769.1"/>
</dbReference>
<dbReference type="SMR" id="A1KLS7"/>
<dbReference type="ESTHER" id="myctu-linb">
    <property type="family name" value="Haloalkane_dehalogenase-HLD2"/>
</dbReference>
<dbReference type="KEGG" id="mbb:BCG_2602"/>
<dbReference type="HOGENOM" id="CLU_020336_13_3_11"/>
<dbReference type="Proteomes" id="UP000001472">
    <property type="component" value="Chromosome"/>
</dbReference>
<dbReference type="GO" id="GO:0018786">
    <property type="term" value="F:haloalkane dehalogenase activity"/>
    <property type="evidence" value="ECO:0007669"/>
    <property type="project" value="UniProtKB-UniRule"/>
</dbReference>
<dbReference type="Gene3D" id="3.40.50.1820">
    <property type="entry name" value="alpha/beta hydrolase"/>
    <property type="match status" value="1"/>
</dbReference>
<dbReference type="HAMAP" id="MF_01231">
    <property type="entry name" value="Haloalk_dehal_type2"/>
    <property type="match status" value="1"/>
</dbReference>
<dbReference type="InterPro" id="IPR000073">
    <property type="entry name" value="AB_hydrolase_1"/>
</dbReference>
<dbReference type="InterPro" id="IPR029058">
    <property type="entry name" value="AB_hydrolase_fold"/>
</dbReference>
<dbReference type="InterPro" id="IPR000639">
    <property type="entry name" value="Epox_hydrolase-like"/>
</dbReference>
<dbReference type="InterPro" id="IPR023594">
    <property type="entry name" value="Haloalkane_dehalogenase_2"/>
</dbReference>
<dbReference type="NCBIfam" id="NF002938">
    <property type="entry name" value="PRK03592.1"/>
    <property type="match status" value="1"/>
</dbReference>
<dbReference type="PANTHER" id="PTHR43329">
    <property type="entry name" value="EPOXIDE HYDROLASE"/>
    <property type="match status" value="1"/>
</dbReference>
<dbReference type="Pfam" id="PF00561">
    <property type="entry name" value="Abhydrolase_1"/>
    <property type="match status" value="1"/>
</dbReference>
<dbReference type="PRINTS" id="PR00412">
    <property type="entry name" value="EPOXHYDRLASE"/>
</dbReference>
<dbReference type="SUPFAM" id="SSF53474">
    <property type="entry name" value="alpha/beta-Hydrolases"/>
    <property type="match status" value="1"/>
</dbReference>
<accession>A1KLS7</accession>
<keyword id="KW-0378">Hydrolase</keyword>
<comment type="function">
    <text evidence="2">Catalyzes hydrolytic cleavage of carbon-halogen bonds in halogenated aliphatic compounds, leading to the formation of the corresponding primary alcohols, halide ions and protons.</text>
</comment>
<comment type="catalytic activity">
    <reaction evidence="2">
        <text>1-haloalkane + H2O = a halide anion + a primary alcohol + H(+)</text>
        <dbReference type="Rhea" id="RHEA:19081"/>
        <dbReference type="ChEBI" id="CHEBI:15377"/>
        <dbReference type="ChEBI" id="CHEBI:15378"/>
        <dbReference type="ChEBI" id="CHEBI:15734"/>
        <dbReference type="ChEBI" id="CHEBI:16042"/>
        <dbReference type="ChEBI" id="CHEBI:18060"/>
        <dbReference type="EC" id="3.8.1.5"/>
    </reaction>
</comment>
<comment type="subunit">
    <text evidence="2">Monomer.</text>
</comment>
<comment type="similarity">
    <text evidence="2">Belongs to the haloalkane dehalogenase family. Type 2 subfamily.</text>
</comment>